<name>RL11_SALTO</name>
<proteinExistence type="inferred from homology"/>
<comment type="function">
    <text evidence="1">Forms part of the ribosomal stalk which helps the ribosome interact with GTP-bound translation factors.</text>
</comment>
<comment type="subunit">
    <text evidence="1">Part of the ribosomal stalk of the 50S ribosomal subunit. Interacts with L10 and the large rRNA to form the base of the stalk. L10 forms an elongated spine to which L12 dimers bind in a sequential fashion forming a multimeric L10(L12)X complex.</text>
</comment>
<comment type="PTM">
    <text evidence="1">One or more lysine residues are methylated.</text>
</comment>
<comment type="similarity">
    <text evidence="1">Belongs to the universal ribosomal protein uL11 family.</text>
</comment>
<reference key="1">
    <citation type="journal article" date="2007" name="Proc. Natl. Acad. Sci. U.S.A.">
        <title>Genome sequencing reveals complex secondary metabolome in the marine actinomycete Salinispora tropica.</title>
        <authorList>
            <person name="Udwary D.W."/>
            <person name="Zeigler L."/>
            <person name="Asolkar R.N."/>
            <person name="Singan V."/>
            <person name="Lapidus A."/>
            <person name="Fenical W."/>
            <person name="Jensen P.R."/>
            <person name="Moore B.S."/>
        </authorList>
    </citation>
    <scope>NUCLEOTIDE SEQUENCE [LARGE SCALE GENOMIC DNA]</scope>
    <source>
        <strain>ATCC BAA-916 / DSM 44818 / JCM 13857 / NBRC 105044 / CNB-440</strain>
    </source>
</reference>
<organism>
    <name type="scientific">Salinispora tropica (strain ATCC BAA-916 / DSM 44818 / JCM 13857 / NBRC 105044 / CNB-440)</name>
    <dbReference type="NCBI Taxonomy" id="369723"/>
    <lineage>
        <taxon>Bacteria</taxon>
        <taxon>Bacillati</taxon>
        <taxon>Actinomycetota</taxon>
        <taxon>Actinomycetes</taxon>
        <taxon>Micromonosporales</taxon>
        <taxon>Micromonosporaceae</taxon>
        <taxon>Salinispora</taxon>
    </lineage>
</organism>
<dbReference type="EMBL" id="CP000667">
    <property type="protein sequence ID" value="ABP56367.1"/>
    <property type="molecule type" value="Genomic_DNA"/>
</dbReference>
<dbReference type="RefSeq" id="WP_012015137.1">
    <property type="nucleotide sequence ID" value="NC_009380.1"/>
</dbReference>
<dbReference type="SMR" id="A4XBR0"/>
<dbReference type="STRING" id="369723.Strop_3937"/>
<dbReference type="GeneID" id="93771405"/>
<dbReference type="KEGG" id="stp:Strop_3937"/>
<dbReference type="PATRIC" id="fig|391037.6.peg.4370"/>
<dbReference type="eggNOG" id="COG0080">
    <property type="taxonomic scope" value="Bacteria"/>
</dbReference>
<dbReference type="HOGENOM" id="CLU_074237_2_1_11"/>
<dbReference type="Proteomes" id="UP000000235">
    <property type="component" value="Chromosome"/>
</dbReference>
<dbReference type="GO" id="GO:0022625">
    <property type="term" value="C:cytosolic large ribosomal subunit"/>
    <property type="evidence" value="ECO:0007669"/>
    <property type="project" value="TreeGrafter"/>
</dbReference>
<dbReference type="GO" id="GO:0070180">
    <property type="term" value="F:large ribosomal subunit rRNA binding"/>
    <property type="evidence" value="ECO:0007669"/>
    <property type="project" value="UniProtKB-UniRule"/>
</dbReference>
<dbReference type="GO" id="GO:0003735">
    <property type="term" value="F:structural constituent of ribosome"/>
    <property type="evidence" value="ECO:0007669"/>
    <property type="project" value="InterPro"/>
</dbReference>
<dbReference type="GO" id="GO:0006412">
    <property type="term" value="P:translation"/>
    <property type="evidence" value="ECO:0007669"/>
    <property type="project" value="UniProtKB-UniRule"/>
</dbReference>
<dbReference type="CDD" id="cd00349">
    <property type="entry name" value="Ribosomal_L11"/>
    <property type="match status" value="1"/>
</dbReference>
<dbReference type="FunFam" id="1.10.10.250:FF:000001">
    <property type="entry name" value="50S ribosomal protein L11"/>
    <property type="match status" value="1"/>
</dbReference>
<dbReference type="FunFam" id="3.30.1550.10:FF:000001">
    <property type="entry name" value="50S ribosomal protein L11"/>
    <property type="match status" value="1"/>
</dbReference>
<dbReference type="Gene3D" id="1.10.10.250">
    <property type="entry name" value="Ribosomal protein L11, C-terminal domain"/>
    <property type="match status" value="1"/>
</dbReference>
<dbReference type="Gene3D" id="3.30.1550.10">
    <property type="entry name" value="Ribosomal protein L11/L12, N-terminal domain"/>
    <property type="match status" value="1"/>
</dbReference>
<dbReference type="HAMAP" id="MF_00736">
    <property type="entry name" value="Ribosomal_uL11"/>
    <property type="match status" value="1"/>
</dbReference>
<dbReference type="InterPro" id="IPR000911">
    <property type="entry name" value="Ribosomal_uL11"/>
</dbReference>
<dbReference type="InterPro" id="IPR006519">
    <property type="entry name" value="Ribosomal_uL11_bac-typ"/>
</dbReference>
<dbReference type="InterPro" id="IPR020783">
    <property type="entry name" value="Ribosomal_uL11_C"/>
</dbReference>
<dbReference type="InterPro" id="IPR036769">
    <property type="entry name" value="Ribosomal_uL11_C_sf"/>
</dbReference>
<dbReference type="InterPro" id="IPR020785">
    <property type="entry name" value="Ribosomal_uL11_CS"/>
</dbReference>
<dbReference type="InterPro" id="IPR020784">
    <property type="entry name" value="Ribosomal_uL11_N"/>
</dbReference>
<dbReference type="InterPro" id="IPR036796">
    <property type="entry name" value="Ribosomal_uL11_N_sf"/>
</dbReference>
<dbReference type="NCBIfam" id="TIGR01632">
    <property type="entry name" value="L11_bact"/>
    <property type="match status" value="1"/>
</dbReference>
<dbReference type="PANTHER" id="PTHR11661">
    <property type="entry name" value="60S RIBOSOMAL PROTEIN L12"/>
    <property type="match status" value="1"/>
</dbReference>
<dbReference type="PANTHER" id="PTHR11661:SF1">
    <property type="entry name" value="LARGE RIBOSOMAL SUBUNIT PROTEIN UL11M"/>
    <property type="match status" value="1"/>
</dbReference>
<dbReference type="Pfam" id="PF00298">
    <property type="entry name" value="Ribosomal_L11"/>
    <property type="match status" value="1"/>
</dbReference>
<dbReference type="Pfam" id="PF03946">
    <property type="entry name" value="Ribosomal_L11_N"/>
    <property type="match status" value="1"/>
</dbReference>
<dbReference type="SMART" id="SM00649">
    <property type="entry name" value="RL11"/>
    <property type="match status" value="1"/>
</dbReference>
<dbReference type="SUPFAM" id="SSF54747">
    <property type="entry name" value="Ribosomal L11/L12e N-terminal domain"/>
    <property type="match status" value="1"/>
</dbReference>
<dbReference type="SUPFAM" id="SSF46906">
    <property type="entry name" value="Ribosomal protein L11, C-terminal domain"/>
    <property type="match status" value="1"/>
</dbReference>
<dbReference type="PROSITE" id="PS00359">
    <property type="entry name" value="RIBOSOMAL_L11"/>
    <property type="match status" value="1"/>
</dbReference>
<feature type="chain" id="PRO_1000083402" description="Large ribosomal subunit protein uL11">
    <location>
        <begin position="1"/>
        <end position="143"/>
    </location>
</feature>
<gene>
    <name evidence="1" type="primary">rplK</name>
    <name type="ordered locus">Strop_3937</name>
</gene>
<protein>
    <recommendedName>
        <fullName evidence="1">Large ribosomal subunit protein uL11</fullName>
    </recommendedName>
    <alternativeName>
        <fullName evidence="2">50S ribosomal protein L11</fullName>
    </alternativeName>
</protein>
<sequence length="143" mass="15294">MPPKKKLVKTFTLQLPAGQATPAPPVGPALGQHGVNIMEFCKSYNAQTESQRGDIVPAEISVYEDRTFTFVLKTPPAARLLIKAAGVAKGSGVPHMEKVGQVSRAQLREIAEKKMADLNANDLDQAEKIIAGTARSMGLNVVD</sequence>
<accession>A4XBR0</accession>
<keyword id="KW-0488">Methylation</keyword>
<keyword id="KW-1185">Reference proteome</keyword>
<keyword id="KW-0687">Ribonucleoprotein</keyword>
<keyword id="KW-0689">Ribosomal protein</keyword>
<keyword id="KW-0694">RNA-binding</keyword>
<keyword id="KW-0699">rRNA-binding</keyword>
<evidence type="ECO:0000255" key="1">
    <source>
        <dbReference type="HAMAP-Rule" id="MF_00736"/>
    </source>
</evidence>
<evidence type="ECO:0000305" key="2"/>